<keyword id="KW-0678">Repressor</keyword>
<keyword id="KW-0346">Stress response</keyword>
<keyword id="KW-0804">Transcription</keyword>
<keyword id="KW-0805">Transcription regulation</keyword>
<organism>
    <name type="scientific">Mycobacterium leprae (strain Br4923)</name>
    <dbReference type="NCBI Taxonomy" id="561304"/>
    <lineage>
        <taxon>Bacteria</taxon>
        <taxon>Bacillati</taxon>
        <taxon>Actinomycetota</taxon>
        <taxon>Actinomycetes</taxon>
        <taxon>Mycobacteriales</taxon>
        <taxon>Mycobacteriaceae</taxon>
        <taxon>Mycobacterium</taxon>
    </lineage>
</organism>
<evidence type="ECO:0000255" key="1">
    <source>
        <dbReference type="HAMAP-Rule" id="MF_00081"/>
    </source>
</evidence>
<reference key="1">
    <citation type="journal article" date="2009" name="Nat. Genet.">
        <title>Comparative genomic and phylogeographic analysis of Mycobacterium leprae.</title>
        <authorList>
            <person name="Monot M."/>
            <person name="Honore N."/>
            <person name="Garnier T."/>
            <person name="Zidane N."/>
            <person name="Sherafi D."/>
            <person name="Paniz-Mondolfi A."/>
            <person name="Matsuoka M."/>
            <person name="Taylor G.M."/>
            <person name="Donoghue H.D."/>
            <person name="Bouwman A."/>
            <person name="Mays S."/>
            <person name="Watson C."/>
            <person name="Lockwood D."/>
            <person name="Khamispour A."/>
            <person name="Dowlati Y."/>
            <person name="Jianping S."/>
            <person name="Rea T.H."/>
            <person name="Vera-Cabrera L."/>
            <person name="Stefani M.M."/>
            <person name="Banu S."/>
            <person name="Macdonald M."/>
            <person name="Sapkota B.R."/>
            <person name="Spencer J.S."/>
            <person name="Thomas J."/>
            <person name="Harshman K."/>
            <person name="Singh P."/>
            <person name="Busso P."/>
            <person name="Gattiker A."/>
            <person name="Rougemont J."/>
            <person name="Brennan P.J."/>
            <person name="Cole S.T."/>
        </authorList>
    </citation>
    <scope>NUCLEOTIDE SEQUENCE [LARGE SCALE GENOMIC DNA]</scope>
    <source>
        <strain>Br4923</strain>
    </source>
</reference>
<comment type="function">
    <text evidence="1">Negative regulator of class I heat shock genes (grpE-dnaK-dnaJ and groELS operons). Prevents heat-shock induction of these operons.</text>
</comment>
<comment type="similarity">
    <text evidence="1">Belongs to the HrcA family.</text>
</comment>
<protein>
    <recommendedName>
        <fullName evidence="1">Heat-inducible transcription repressor HrcA</fullName>
    </recommendedName>
</protein>
<proteinExistence type="inferred from homology"/>
<sequence length="343" mass="36648">MGNADERRFEVLRAIVADFVATKEPIGSRALVERHNLGVSSATIRNDMAVLEAEGYITQPHTSSGRVPTEKGYREFVDRLEDVKPLSAAERRAIQSFLESGVDLDDVLRRAVRLLAQLTCQVAVVQYPTLSTSTVRHLEVIALSPARLLMVVITESGRVDQRIAELGDVIDDYQLSQLREMLSQAMGGKKLSAASAAVADLVGRFRGTGGLANAVGRSANVLLESLVEHTEERLLLGGTANLTRNSADFGGSLRSILEALEEQVVVLRLLAAQQEAGKVTVRIGHETAAEQIMGTSMVSTAYGTSGTVYGGMGVLGPTRMDYPGTIASVAAVALYIGEVLGAR</sequence>
<name>HRCA_MYCLB</name>
<dbReference type="EMBL" id="FM211192">
    <property type="protein sequence ID" value="CAR70717.1"/>
    <property type="molecule type" value="Genomic_DNA"/>
</dbReference>
<dbReference type="SMR" id="B8ZUS6"/>
<dbReference type="KEGG" id="mlb:MLBr00624"/>
<dbReference type="HOGENOM" id="CLU_050019_2_0_11"/>
<dbReference type="Proteomes" id="UP000006900">
    <property type="component" value="Chromosome"/>
</dbReference>
<dbReference type="GO" id="GO:0003677">
    <property type="term" value="F:DNA binding"/>
    <property type="evidence" value="ECO:0007669"/>
    <property type="project" value="InterPro"/>
</dbReference>
<dbReference type="GO" id="GO:0045892">
    <property type="term" value="P:negative regulation of DNA-templated transcription"/>
    <property type="evidence" value="ECO:0007669"/>
    <property type="project" value="UniProtKB-UniRule"/>
</dbReference>
<dbReference type="FunFam" id="1.10.10.10:FF:000049">
    <property type="entry name" value="Heat-inducible transcription repressor HrcA"/>
    <property type="match status" value="1"/>
</dbReference>
<dbReference type="Gene3D" id="3.30.450.40">
    <property type="match status" value="1"/>
</dbReference>
<dbReference type="Gene3D" id="3.30.390.60">
    <property type="entry name" value="Heat-inducible transcription repressor hrca homolog, domain 3"/>
    <property type="match status" value="1"/>
</dbReference>
<dbReference type="Gene3D" id="1.10.10.10">
    <property type="entry name" value="Winged helix-like DNA-binding domain superfamily/Winged helix DNA-binding domain"/>
    <property type="match status" value="1"/>
</dbReference>
<dbReference type="HAMAP" id="MF_00081">
    <property type="entry name" value="HrcA"/>
    <property type="match status" value="1"/>
</dbReference>
<dbReference type="InterPro" id="IPR029016">
    <property type="entry name" value="GAF-like_dom_sf"/>
</dbReference>
<dbReference type="InterPro" id="IPR002571">
    <property type="entry name" value="HrcA"/>
</dbReference>
<dbReference type="InterPro" id="IPR021153">
    <property type="entry name" value="HrcA_C"/>
</dbReference>
<dbReference type="InterPro" id="IPR036388">
    <property type="entry name" value="WH-like_DNA-bd_sf"/>
</dbReference>
<dbReference type="InterPro" id="IPR036390">
    <property type="entry name" value="WH_DNA-bd_sf"/>
</dbReference>
<dbReference type="InterPro" id="IPR023120">
    <property type="entry name" value="WHTH_transcript_rep_HrcA_IDD"/>
</dbReference>
<dbReference type="NCBIfam" id="TIGR00331">
    <property type="entry name" value="hrcA"/>
    <property type="match status" value="1"/>
</dbReference>
<dbReference type="PANTHER" id="PTHR34824">
    <property type="entry name" value="HEAT-INDUCIBLE TRANSCRIPTION REPRESSOR HRCA"/>
    <property type="match status" value="1"/>
</dbReference>
<dbReference type="PANTHER" id="PTHR34824:SF1">
    <property type="entry name" value="HEAT-INDUCIBLE TRANSCRIPTION REPRESSOR HRCA"/>
    <property type="match status" value="1"/>
</dbReference>
<dbReference type="Pfam" id="PF01628">
    <property type="entry name" value="HrcA"/>
    <property type="match status" value="1"/>
</dbReference>
<dbReference type="PIRSF" id="PIRSF005485">
    <property type="entry name" value="HrcA"/>
    <property type="match status" value="1"/>
</dbReference>
<dbReference type="SUPFAM" id="SSF55781">
    <property type="entry name" value="GAF domain-like"/>
    <property type="match status" value="1"/>
</dbReference>
<dbReference type="SUPFAM" id="SSF46785">
    <property type="entry name" value="Winged helix' DNA-binding domain"/>
    <property type="match status" value="1"/>
</dbReference>
<accession>B8ZUS6</accession>
<gene>
    <name evidence="1" type="primary">hrcA</name>
    <name type="ordered locus">MLBr00624</name>
</gene>
<feature type="chain" id="PRO_1000118308" description="Heat-inducible transcription repressor HrcA">
    <location>
        <begin position="1"/>
        <end position="343"/>
    </location>
</feature>